<protein>
    <recommendedName>
        <fullName>Regulating synaptic membrane exocytosis protein 4</fullName>
    </recommendedName>
    <alternativeName>
        <fullName>RIM4 gamma</fullName>
    </alternativeName>
    <alternativeName>
        <fullName>Rab3-interacting molecule 4</fullName>
        <shortName>RIM 4</shortName>
    </alternativeName>
</protein>
<gene>
    <name type="primary">Rims4</name>
</gene>
<reference key="1">
    <citation type="journal article" date="2003" name="Genomics">
        <title>Genomic definition of RIM proteins: evolutionary amplification of a family of synaptic regulatory proteins.</title>
        <authorList>
            <person name="Wang Y."/>
            <person name="Suedhof T.C."/>
        </authorList>
    </citation>
    <scope>NUCLEOTIDE SEQUENCE [MRNA]</scope>
</reference>
<reference key="2">
    <citation type="journal article" date="2010" name="Cell">
        <title>A tissue-specific atlas of mouse protein phosphorylation and expression.</title>
        <authorList>
            <person name="Huttlin E.L."/>
            <person name="Jedrychowski M.P."/>
            <person name="Elias J.E."/>
            <person name="Goswami T."/>
            <person name="Rad R."/>
            <person name="Beausoleil S.A."/>
            <person name="Villen J."/>
            <person name="Haas W."/>
            <person name="Sowa M.E."/>
            <person name="Gygi S.P."/>
        </authorList>
    </citation>
    <scope>PHOSPHORYLATION [LARGE SCALE ANALYSIS] AT SER-254 AND SER-257</scope>
    <scope>IDENTIFICATION BY MASS SPECTROMETRY [LARGE SCALE ANALYSIS]</scope>
    <source>
        <tissue>Brain</tissue>
    </source>
</reference>
<feature type="chain" id="PRO_0000190208" description="Regulating synaptic membrane exocytosis protein 4">
    <location>
        <begin position="1"/>
        <end position="269"/>
    </location>
</feature>
<feature type="domain" description="C2" evidence="2">
    <location>
        <begin position="115"/>
        <end position="233"/>
    </location>
</feature>
<feature type="modified residue" description="Phosphoserine" evidence="3">
    <location>
        <position position="254"/>
    </location>
</feature>
<feature type="modified residue" description="Phosphoserine" evidence="3">
    <location>
        <position position="257"/>
    </location>
</feature>
<dbReference type="EMBL" id="AY326955">
    <property type="protein sequence ID" value="AAQ01682.1"/>
    <property type="molecule type" value="mRNA"/>
</dbReference>
<dbReference type="CCDS" id="CCDS17018.1"/>
<dbReference type="RefSeq" id="NP_898844.1">
    <property type="nucleotide sequence ID" value="NM_183023.2"/>
</dbReference>
<dbReference type="SMR" id="P60191"/>
<dbReference type="FunCoup" id="P60191">
    <property type="interactions" value="90"/>
</dbReference>
<dbReference type="IntAct" id="P60191">
    <property type="interactions" value="1"/>
</dbReference>
<dbReference type="MINT" id="P60191"/>
<dbReference type="STRING" id="10090.ENSMUSP00000045637"/>
<dbReference type="iPTMnet" id="P60191"/>
<dbReference type="PhosphoSitePlus" id="P60191"/>
<dbReference type="PaxDb" id="10090-ENSMUSP00000045637"/>
<dbReference type="ProteomicsDB" id="255273"/>
<dbReference type="Antibodypedia" id="43706">
    <property type="antibodies" value="114 antibodies from 25 providers"/>
</dbReference>
<dbReference type="DNASU" id="241770"/>
<dbReference type="Ensembl" id="ENSMUST00000044734.3">
    <property type="protein sequence ID" value="ENSMUSP00000045637.3"/>
    <property type="gene ID" value="ENSMUSG00000035226.6"/>
</dbReference>
<dbReference type="GeneID" id="241770"/>
<dbReference type="KEGG" id="mmu:241770"/>
<dbReference type="UCSC" id="uc008nto.1">
    <property type="organism name" value="mouse"/>
</dbReference>
<dbReference type="AGR" id="MGI:2674366"/>
<dbReference type="CTD" id="140730"/>
<dbReference type="MGI" id="MGI:2674366">
    <property type="gene designation" value="Rims4"/>
</dbReference>
<dbReference type="VEuPathDB" id="HostDB:ENSMUSG00000035226"/>
<dbReference type="eggNOG" id="KOG2060">
    <property type="taxonomic scope" value="Eukaryota"/>
</dbReference>
<dbReference type="GeneTree" id="ENSGT00940000158934"/>
<dbReference type="HOGENOM" id="CLU_071205_0_0_1"/>
<dbReference type="InParanoid" id="P60191"/>
<dbReference type="OMA" id="GLYMERS"/>
<dbReference type="OrthoDB" id="420032at2759"/>
<dbReference type="PhylomeDB" id="P60191"/>
<dbReference type="BioGRID-ORCS" id="241770">
    <property type="hits" value="2 hits in 76 CRISPR screens"/>
</dbReference>
<dbReference type="CD-CODE" id="CE726F99">
    <property type="entry name" value="Postsynaptic density"/>
</dbReference>
<dbReference type="ChiTaRS" id="Rims4">
    <property type="organism name" value="mouse"/>
</dbReference>
<dbReference type="PRO" id="PR:P60191"/>
<dbReference type="Proteomes" id="UP000000589">
    <property type="component" value="Chromosome 2"/>
</dbReference>
<dbReference type="RNAct" id="P60191">
    <property type="molecule type" value="protein"/>
</dbReference>
<dbReference type="Bgee" id="ENSMUSG00000035226">
    <property type="expression patterns" value="Expressed in lumbar subsegment of spinal cord and 95 other cell types or tissues"/>
</dbReference>
<dbReference type="GO" id="GO:0097060">
    <property type="term" value="C:synaptic membrane"/>
    <property type="evidence" value="ECO:0000314"/>
    <property type="project" value="MGI"/>
</dbReference>
<dbReference type="GO" id="GO:0031267">
    <property type="term" value="F:small GTPase binding"/>
    <property type="evidence" value="ECO:0007669"/>
    <property type="project" value="InterPro"/>
</dbReference>
<dbReference type="GO" id="GO:0044325">
    <property type="term" value="F:transmembrane transporter binding"/>
    <property type="evidence" value="ECO:0000314"/>
    <property type="project" value="MGI"/>
</dbReference>
<dbReference type="GO" id="GO:0006887">
    <property type="term" value="P:exocytosis"/>
    <property type="evidence" value="ECO:0007669"/>
    <property type="project" value="UniProtKB-KW"/>
</dbReference>
<dbReference type="GO" id="GO:0006836">
    <property type="term" value="P:neurotransmitter transport"/>
    <property type="evidence" value="ECO:0007669"/>
    <property type="project" value="UniProtKB-KW"/>
</dbReference>
<dbReference type="GO" id="GO:0042391">
    <property type="term" value="P:regulation of membrane potential"/>
    <property type="evidence" value="ECO:0000314"/>
    <property type="project" value="MGI"/>
</dbReference>
<dbReference type="GO" id="GO:2000300">
    <property type="term" value="P:regulation of synaptic vesicle exocytosis"/>
    <property type="evidence" value="ECO:0000250"/>
    <property type="project" value="ParkinsonsUK-UCL"/>
</dbReference>
<dbReference type="FunFam" id="2.60.40.150:FF:000001">
    <property type="entry name" value="Regulating synaptic membrane exocytosis 3, isoform CRA_a"/>
    <property type="match status" value="1"/>
</dbReference>
<dbReference type="Gene3D" id="2.60.40.150">
    <property type="entry name" value="C2 domain"/>
    <property type="match status" value="1"/>
</dbReference>
<dbReference type="InterPro" id="IPR000008">
    <property type="entry name" value="C2_dom"/>
</dbReference>
<dbReference type="InterPro" id="IPR035892">
    <property type="entry name" value="C2_domain_sf"/>
</dbReference>
<dbReference type="InterPro" id="IPR039032">
    <property type="entry name" value="Rim-like"/>
</dbReference>
<dbReference type="PANTHER" id="PTHR12157:SF26">
    <property type="entry name" value="REGULATING SYNAPTIC MEMBRANE EXOCYTOSIS 4"/>
    <property type="match status" value="1"/>
</dbReference>
<dbReference type="PANTHER" id="PTHR12157">
    <property type="entry name" value="REGULATING SYNAPTIC MEMBRANE EXOCYTOSIS PROTEIN"/>
    <property type="match status" value="1"/>
</dbReference>
<dbReference type="Pfam" id="PF00168">
    <property type="entry name" value="C2"/>
    <property type="match status" value="1"/>
</dbReference>
<dbReference type="SMART" id="SM00239">
    <property type="entry name" value="C2"/>
    <property type="match status" value="1"/>
</dbReference>
<dbReference type="SUPFAM" id="SSF49562">
    <property type="entry name" value="C2 domain (Calcium/lipid-binding domain, CaLB)"/>
    <property type="match status" value="1"/>
</dbReference>
<dbReference type="PROSITE" id="PS50004">
    <property type="entry name" value="C2"/>
    <property type="match status" value="1"/>
</dbReference>
<name>RIMS4_MOUSE</name>
<keyword id="KW-0268">Exocytosis</keyword>
<keyword id="KW-0532">Neurotransmitter transport</keyword>
<keyword id="KW-0597">Phosphoprotein</keyword>
<keyword id="KW-1185">Reference proteome</keyword>
<keyword id="KW-0770">Synapse</keyword>
<keyword id="KW-0813">Transport</keyword>
<evidence type="ECO:0000250" key="1"/>
<evidence type="ECO:0000255" key="2">
    <source>
        <dbReference type="PROSITE-ProRule" id="PRU00041"/>
    </source>
</evidence>
<evidence type="ECO:0007744" key="3">
    <source>
    </source>
</evidence>
<organism>
    <name type="scientific">Mus musculus</name>
    <name type="common">Mouse</name>
    <dbReference type="NCBI Taxonomy" id="10090"/>
    <lineage>
        <taxon>Eukaryota</taxon>
        <taxon>Metazoa</taxon>
        <taxon>Chordata</taxon>
        <taxon>Craniata</taxon>
        <taxon>Vertebrata</taxon>
        <taxon>Euteleostomi</taxon>
        <taxon>Mammalia</taxon>
        <taxon>Eutheria</taxon>
        <taxon>Euarchontoglires</taxon>
        <taxon>Glires</taxon>
        <taxon>Rodentia</taxon>
        <taxon>Myomorpha</taxon>
        <taxon>Muroidea</taxon>
        <taxon>Muridae</taxon>
        <taxon>Murinae</taxon>
        <taxon>Mus</taxon>
        <taxon>Mus</taxon>
    </lineage>
</organism>
<accession>P60191</accession>
<proteinExistence type="evidence at protein level"/>
<comment type="function">
    <text evidence="1">Regulates synaptic membrane exocytosis.</text>
</comment>
<comment type="subunit">
    <text evidence="1">Binds PPFIA3 (By similarity). Does not bind RAB3.</text>
</comment>
<comment type="subcellular location">
    <subcellularLocation>
        <location evidence="1">Synapse</location>
    </subcellularLocation>
</comment>
<sequence length="269" mass="29329">MERSQSRLSLSASFEALAIYFPCMNSFDDEDAADSRRLKGAIQRSTETGLAVEMPSRTLRQASHESIEDSMNSYGSEGNLNYGGVCLASDAQFSDFLGSMGPAQFVGRQTLATTPMGDVEIGLQERNGQLEVDIIQARGLTAKPGSKTLPAAYIKAYLLENGVCIAKKKTKVARKSLDPLYNQVLLFPESPQGKVLQVIVWGNYGRMERKQFMGVARVLLEELDLTTLAVGWYKLFPTSSMVDPATGPLLRQASQLSLESTVGPCGERS</sequence>